<reference key="1">
    <citation type="submission" date="2006-03" db="EMBL/GenBank/DDBJ databases">
        <title>Complete sequence of Rhodopseudomonas palustris BisB18.</title>
        <authorList>
            <consortium name="US DOE Joint Genome Institute"/>
            <person name="Copeland A."/>
            <person name="Lucas S."/>
            <person name="Lapidus A."/>
            <person name="Barry K."/>
            <person name="Detter J.C."/>
            <person name="Glavina del Rio T."/>
            <person name="Hammon N."/>
            <person name="Israni S."/>
            <person name="Dalin E."/>
            <person name="Tice H."/>
            <person name="Pitluck S."/>
            <person name="Chain P."/>
            <person name="Malfatti S."/>
            <person name="Shin M."/>
            <person name="Vergez L."/>
            <person name="Schmutz J."/>
            <person name="Larimer F."/>
            <person name="Land M."/>
            <person name="Hauser L."/>
            <person name="Pelletier D.A."/>
            <person name="Kyrpides N."/>
            <person name="Anderson I."/>
            <person name="Oda Y."/>
            <person name="Harwood C.S."/>
            <person name="Richardson P."/>
        </authorList>
    </citation>
    <scope>NUCLEOTIDE SEQUENCE [LARGE SCALE GENOMIC DNA]</scope>
    <source>
        <strain>BisB18</strain>
    </source>
</reference>
<accession>Q215F8</accession>
<name>SYP_RHOPB</name>
<proteinExistence type="inferred from homology"/>
<comment type="function">
    <text evidence="1">Catalyzes the attachment of proline to tRNA(Pro) in a two-step reaction: proline is first activated by ATP to form Pro-AMP and then transferred to the acceptor end of tRNA(Pro).</text>
</comment>
<comment type="catalytic activity">
    <reaction evidence="1">
        <text>tRNA(Pro) + L-proline + ATP = L-prolyl-tRNA(Pro) + AMP + diphosphate</text>
        <dbReference type="Rhea" id="RHEA:14305"/>
        <dbReference type="Rhea" id="RHEA-COMP:9700"/>
        <dbReference type="Rhea" id="RHEA-COMP:9702"/>
        <dbReference type="ChEBI" id="CHEBI:30616"/>
        <dbReference type="ChEBI" id="CHEBI:33019"/>
        <dbReference type="ChEBI" id="CHEBI:60039"/>
        <dbReference type="ChEBI" id="CHEBI:78442"/>
        <dbReference type="ChEBI" id="CHEBI:78532"/>
        <dbReference type="ChEBI" id="CHEBI:456215"/>
        <dbReference type="EC" id="6.1.1.15"/>
    </reaction>
</comment>
<comment type="subunit">
    <text evidence="1">Homodimer.</text>
</comment>
<comment type="subcellular location">
    <subcellularLocation>
        <location evidence="1">Cytoplasm</location>
    </subcellularLocation>
</comment>
<comment type="similarity">
    <text evidence="1">Belongs to the class-II aminoacyl-tRNA synthetase family. ProS type 2 subfamily.</text>
</comment>
<protein>
    <recommendedName>
        <fullName evidence="1">Proline--tRNA ligase</fullName>
        <ecNumber evidence="1">6.1.1.15</ecNumber>
    </recommendedName>
    <alternativeName>
        <fullName evidence="1">Prolyl-tRNA synthetase</fullName>
        <shortName evidence="1">ProRS</shortName>
    </alternativeName>
</protein>
<sequence>MRLSRFFLPILKETPKEAEIVSHRLMLRAGMMRQEAAGIYAWLPLGLRVLKKIEQIVREEQNRAGAIECLMPTLQLADLWRESGRYDAYGPEMLRITDRHKRELLYGPTNEEMITEIFRAYVRSYKNLPLNLYHIQWKFRDEQRPRFGVMRGREFLMKDAYSFDIDEAAARKSYNRMFVAYLRTFARMGLKAIPMRAETGPIGGDLSHEFIVLAETGESGVFCDSDVLNLPVPGDDVDYDGDLTPIIKQWTSVYAATEDVHDAERFEREVPADKKLNTRGIEVGQIFYFGTKYSDKMKALVAGPDGVDVPVHGGSYGVGVSRLVGAIIEACHDENGIKWPEEVAPFRAAILNLKQGSADTDAACEALYKELSAKGVDVLYDDTDQRAGGKFATADLIGIPWQILVGPKGLAEGKVELKRRADGSRENVTPAEAVARLTT</sequence>
<keyword id="KW-0030">Aminoacyl-tRNA synthetase</keyword>
<keyword id="KW-0067">ATP-binding</keyword>
<keyword id="KW-0963">Cytoplasm</keyword>
<keyword id="KW-0436">Ligase</keyword>
<keyword id="KW-0547">Nucleotide-binding</keyword>
<keyword id="KW-0648">Protein biosynthesis</keyword>
<gene>
    <name evidence="1" type="primary">proS</name>
    <name type="ordered locus">RPC_2427</name>
</gene>
<dbReference type="EC" id="6.1.1.15" evidence="1"/>
<dbReference type="EMBL" id="CP000301">
    <property type="protein sequence ID" value="ABD87978.1"/>
    <property type="molecule type" value="Genomic_DNA"/>
</dbReference>
<dbReference type="SMR" id="Q215F8"/>
<dbReference type="STRING" id="316056.RPC_2427"/>
<dbReference type="KEGG" id="rpc:RPC_2427"/>
<dbReference type="eggNOG" id="COG0442">
    <property type="taxonomic scope" value="Bacteria"/>
</dbReference>
<dbReference type="HOGENOM" id="CLU_016739_4_2_5"/>
<dbReference type="OrthoDB" id="9809052at2"/>
<dbReference type="GO" id="GO:0005829">
    <property type="term" value="C:cytosol"/>
    <property type="evidence" value="ECO:0007669"/>
    <property type="project" value="TreeGrafter"/>
</dbReference>
<dbReference type="GO" id="GO:0005524">
    <property type="term" value="F:ATP binding"/>
    <property type="evidence" value="ECO:0007669"/>
    <property type="project" value="UniProtKB-UniRule"/>
</dbReference>
<dbReference type="GO" id="GO:0004827">
    <property type="term" value="F:proline-tRNA ligase activity"/>
    <property type="evidence" value="ECO:0007669"/>
    <property type="project" value="UniProtKB-UniRule"/>
</dbReference>
<dbReference type="GO" id="GO:0006433">
    <property type="term" value="P:prolyl-tRNA aminoacylation"/>
    <property type="evidence" value="ECO:0007669"/>
    <property type="project" value="UniProtKB-UniRule"/>
</dbReference>
<dbReference type="CDD" id="cd00861">
    <property type="entry name" value="ProRS_anticodon_short"/>
    <property type="match status" value="1"/>
</dbReference>
<dbReference type="CDD" id="cd00779">
    <property type="entry name" value="ProRS_core_prok"/>
    <property type="match status" value="1"/>
</dbReference>
<dbReference type="FunFam" id="3.30.930.10:FF:000042">
    <property type="entry name" value="probable proline--tRNA ligase, mitochondrial"/>
    <property type="match status" value="1"/>
</dbReference>
<dbReference type="FunFam" id="3.40.50.800:FF:000032">
    <property type="entry name" value="Proline--tRNA ligase"/>
    <property type="match status" value="1"/>
</dbReference>
<dbReference type="Gene3D" id="3.40.50.800">
    <property type="entry name" value="Anticodon-binding domain"/>
    <property type="match status" value="1"/>
</dbReference>
<dbReference type="Gene3D" id="3.30.930.10">
    <property type="entry name" value="Bira Bifunctional Protein, Domain 2"/>
    <property type="match status" value="1"/>
</dbReference>
<dbReference type="HAMAP" id="MF_01570">
    <property type="entry name" value="Pro_tRNA_synth_type2"/>
    <property type="match status" value="1"/>
</dbReference>
<dbReference type="InterPro" id="IPR002314">
    <property type="entry name" value="aa-tRNA-synt_IIb"/>
</dbReference>
<dbReference type="InterPro" id="IPR006195">
    <property type="entry name" value="aa-tRNA-synth_II"/>
</dbReference>
<dbReference type="InterPro" id="IPR045864">
    <property type="entry name" value="aa-tRNA-synth_II/BPL/LPL"/>
</dbReference>
<dbReference type="InterPro" id="IPR004154">
    <property type="entry name" value="Anticodon-bd"/>
</dbReference>
<dbReference type="InterPro" id="IPR036621">
    <property type="entry name" value="Anticodon-bd_dom_sf"/>
</dbReference>
<dbReference type="InterPro" id="IPR002316">
    <property type="entry name" value="Pro-tRNA-ligase_IIa"/>
</dbReference>
<dbReference type="InterPro" id="IPR004500">
    <property type="entry name" value="Pro-tRNA-synth_IIa_bac-type"/>
</dbReference>
<dbReference type="InterPro" id="IPR050062">
    <property type="entry name" value="Pro-tRNA_synthetase"/>
</dbReference>
<dbReference type="InterPro" id="IPR023716">
    <property type="entry name" value="Prolyl-tRNA_ligase_IIa_type2"/>
</dbReference>
<dbReference type="InterPro" id="IPR044140">
    <property type="entry name" value="ProRS_anticodon_short"/>
</dbReference>
<dbReference type="InterPro" id="IPR033730">
    <property type="entry name" value="ProRS_core_prok"/>
</dbReference>
<dbReference type="NCBIfam" id="NF008979">
    <property type="entry name" value="PRK12325.1"/>
    <property type="match status" value="1"/>
</dbReference>
<dbReference type="NCBIfam" id="TIGR00409">
    <property type="entry name" value="proS_fam_II"/>
    <property type="match status" value="1"/>
</dbReference>
<dbReference type="PANTHER" id="PTHR42753">
    <property type="entry name" value="MITOCHONDRIAL RIBOSOME PROTEIN L39/PROLYL-TRNA LIGASE FAMILY MEMBER"/>
    <property type="match status" value="1"/>
</dbReference>
<dbReference type="PANTHER" id="PTHR42753:SF2">
    <property type="entry name" value="PROLINE--TRNA LIGASE"/>
    <property type="match status" value="1"/>
</dbReference>
<dbReference type="Pfam" id="PF03129">
    <property type="entry name" value="HGTP_anticodon"/>
    <property type="match status" value="1"/>
</dbReference>
<dbReference type="Pfam" id="PF00587">
    <property type="entry name" value="tRNA-synt_2b"/>
    <property type="match status" value="1"/>
</dbReference>
<dbReference type="PRINTS" id="PR01046">
    <property type="entry name" value="TRNASYNTHPRO"/>
</dbReference>
<dbReference type="SUPFAM" id="SSF52954">
    <property type="entry name" value="Class II aaRS ABD-related"/>
    <property type="match status" value="1"/>
</dbReference>
<dbReference type="SUPFAM" id="SSF55681">
    <property type="entry name" value="Class II aaRS and biotin synthetases"/>
    <property type="match status" value="1"/>
</dbReference>
<dbReference type="PROSITE" id="PS50862">
    <property type="entry name" value="AA_TRNA_LIGASE_II"/>
    <property type="match status" value="1"/>
</dbReference>
<evidence type="ECO:0000255" key="1">
    <source>
        <dbReference type="HAMAP-Rule" id="MF_01570"/>
    </source>
</evidence>
<organism>
    <name type="scientific">Rhodopseudomonas palustris (strain BisB18)</name>
    <dbReference type="NCBI Taxonomy" id="316056"/>
    <lineage>
        <taxon>Bacteria</taxon>
        <taxon>Pseudomonadati</taxon>
        <taxon>Pseudomonadota</taxon>
        <taxon>Alphaproteobacteria</taxon>
        <taxon>Hyphomicrobiales</taxon>
        <taxon>Nitrobacteraceae</taxon>
        <taxon>Rhodopseudomonas</taxon>
    </lineage>
</organism>
<feature type="chain" id="PRO_0000248911" description="Proline--tRNA ligase">
    <location>
        <begin position="1"/>
        <end position="439"/>
    </location>
</feature>